<accession>Q8EWZ2</accession>
<sequence length="195" mass="22132">METINNVFDSVISLQSAIPDNSQIINQIFPNVYVLIAHVISLIFLLLLVIRLAWKPTKSYIEARTKEIQRKMEAAEKAQLESEKNLHISRIKLLESKNTAAEIIENAELDAEKTKKKIEAVALNKASQIESEGYSKIKKQELELEKRKNLEVSKLALETAGIFLSKKIDEEENKKIIDDIVNDLTAKLESSSKEK</sequence>
<gene>
    <name evidence="1" type="primary">atpF</name>
    <name type="ordered locus">MYPE580</name>
</gene>
<name>ATPF_MALP2</name>
<comment type="function">
    <text evidence="1">F(1)F(0) ATP synthase produces ATP from ADP in the presence of a proton or sodium gradient. F-type ATPases consist of two structural domains, F(1) containing the extramembraneous catalytic core and F(0) containing the membrane proton channel, linked together by a central stalk and a peripheral stalk. During catalysis, ATP synthesis in the catalytic domain of F(1) is coupled via a rotary mechanism of the central stalk subunits to proton translocation.</text>
</comment>
<comment type="function">
    <text evidence="1">Component of the F(0) channel, it forms part of the peripheral stalk, linking F(1) to F(0).</text>
</comment>
<comment type="subunit">
    <text evidence="1">F-type ATPases have 2 components, F(1) - the catalytic core - and F(0) - the membrane proton channel. F(1) has five subunits: alpha(3), beta(3), gamma(1), delta(1), epsilon(1). F(0) has three main subunits: a(1), b(2) and c(10-14). The alpha and beta chains form an alternating ring which encloses part of the gamma chain. F(1) is attached to F(0) by a central stalk formed by the gamma and epsilon chains, while a peripheral stalk is formed by the delta and b chains.</text>
</comment>
<comment type="subcellular location">
    <subcellularLocation>
        <location evidence="1">Cell membrane</location>
        <topology evidence="1">Single-pass membrane protein</topology>
    </subcellularLocation>
</comment>
<comment type="similarity">
    <text evidence="1">Belongs to the ATPase B chain family.</text>
</comment>
<feature type="chain" id="PRO_0000368614" description="ATP synthase subunit b">
    <location>
        <begin position="1"/>
        <end position="195"/>
    </location>
</feature>
<feature type="transmembrane region" description="Helical" evidence="1">
    <location>
        <begin position="28"/>
        <end position="48"/>
    </location>
</feature>
<organism>
    <name type="scientific">Malacoplasma penetrans (strain HF-2)</name>
    <name type="common">Mycoplasma penetrans</name>
    <dbReference type="NCBI Taxonomy" id="272633"/>
    <lineage>
        <taxon>Bacteria</taxon>
        <taxon>Bacillati</taxon>
        <taxon>Mycoplasmatota</taxon>
        <taxon>Mycoplasmoidales</taxon>
        <taxon>Mycoplasmoidaceae</taxon>
        <taxon>Malacoplasma</taxon>
    </lineage>
</organism>
<dbReference type="EMBL" id="BA000026">
    <property type="protein sequence ID" value="BAC43848.1"/>
    <property type="molecule type" value="Genomic_DNA"/>
</dbReference>
<dbReference type="RefSeq" id="WP_011076884.1">
    <property type="nucleotide sequence ID" value="NC_004432.1"/>
</dbReference>
<dbReference type="SMR" id="Q8EWZ2"/>
<dbReference type="FunCoup" id="Q8EWZ2">
    <property type="interactions" value="60"/>
</dbReference>
<dbReference type="STRING" id="272633.gene:10731149"/>
<dbReference type="KEGG" id="mpe:MYPE580"/>
<dbReference type="eggNOG" id="COG0711">
    <property type="taxonomic scope" value="Bacteria"/>
</dbReference>
<dbReference type="HOGENOM" id="CLU_079215_4_3_14"/>
<dbReference type="InParanoid" id="Q8EWZ2"/>
<dbReference type="Proteomes" id="UP000002522">
    <property type="component" value="Chromosome"/>
</dbReference>
<dbReference type="GO" id="GO:0005886">
    <property type="term" value="C:plasma membrane"/>
    <property type="evidence" value="ECO:0007669"/>
    <property type="project" value="UniProtKB-SubCell"/>
</dbReference>
<dbReference type="GO" id="GO:0045259">
    <property type="term" value="C:proton-transporting ATP synthase complex"/>
    <property type="evidence" value="ECO:0007669"/>
    <property type="project" value="UniProtKB-KW"/>
</dbReference>
<dbReference type="GO" id="GO:0046933">
    <property type="term" value="F:proton-transporting ATP synthase activity, rotational mechanism"/>
    <property type="evidence" value="ECO:0007669"/>
    <property type="project" value="UniProtKB-UniRule"/>
</dbReference>
<dbReference type="GO" id="GO:0046961">
    <property type="term" value="F:proton-transporting ATPase activity, rotational mechanism"/>
    <property type="evidence" value="ECO:0007669"/>
    <property type="project" value="TreeGrafter"/>
</dbReference>
<dbReference type="CDD" id="cd06503">
    <property type="entry name" value="ATP-synt_Fo_b"/>
    <property type="match status" value="1"/>
</dbReference>
<dbReference type="HAMAP" id="MF_01398">
    <property type="entry name" value="ATP_synth_b_bprime"/>
    <property type="match status" value="1"/>
</dbReference>
<dbReference type="InterPro" id="IPR002146">
    <property type="entry name" value="ATP_synth_b/b'su_bac/chlpt"/>
</dbReference>
<dbReference type="InterPro" id="IPR050059">
    <property type="entry name" value="ATP_synthase_B_chain"/>
</dbReference>
<dbReference type="PANTHER" id="PTHR33445:SF1">
    <property type="entry name" value="ATP SYNTHASE SUBUNIT B"/>
    <property type="match status" value="1"/>
</dbReference>
<dbReference type="PANTHER" id="PTHR33445">
    <property type="entry name" value="ATP SYNTHASE SUBUNIT B', CHLOROPLASTIC"/>
    <property type="match status" value="1"/>
</dbReference>
<dbReference type="Pfam" id="PF00430">
    <property type="entry name" value="ATP-synt_B"/>
    <property type="match status" value="1"/>
</dbReference>
<protein>
    <recommendedName>
        <fullName evidence="1">ATP synthase subunit b</fullName>
    </recommendedName>
    <alternativeName>
        <fullName evidence="1">ATP synthase F(0) sector subunit b</fullName>
    </alternativeName>
    <alternativeName>
        <fullName evidence="1">ATPase subunit I</fullName>
    </alternativeName>
    <alternativeName>
        <fullName evidence="1">F-type ATPase subunit b</fullName>
        <shortName evidence="1">F-ATPase subunit b</shortName>
    </alternativeName>
</protein>
<keyword id="KW-0066">ATP synthesis</keyword>
<keyword id="KW-1003">Cell membrane</keyword>
<keyword id="KW-0138">CF(0)</keyword>
<keyword id="KW-0375">Hydrogen ion transport</keyword>
<keyword id="KW-0406">Ion transport</keyword>
<keyword id="KW-0472">Membrane</keyword>
<keyword id="KW-1185">Reference proteome</keyword>
<keyword id="KW-0812">Transmembrane</keyword>
<keyword id="KW-1133">Transmembrane helix</keyword>
<keyword id="KW-0813">Transport</keyword>
<evidence type="ECO:0000255" key="1">
    <source>
        <dbReference type="HAMAP-Rule" id="MF_01398"/>
    </source>
</evidence>
<reference key="1">
    <citation type="journal article" date="2002" name="Nucleic Acids Res.">
        <title>The complete genomic sequence of Mycoplasma penetrans, an intracellular bacterial pathogen in humans.</title>
        <authorList>
            <person name="Sasaki Y."/>
            <person name="Ishikawa J."/>
            <person name="Yamashita A."/>
            <person name="Oshima K."/>
            <person name="Kenri T."/>
            <person name="Furuya K."/>
            <person name="Yoshino C."/>
            <person name="Horino A."/>
            <person name="Shiba T."/>
            <person name="Sasaki T."/>
            <person name="Hattori M."/>
        </authorList>
    </citation>
    <scope>NUCLEOTIDE SEQUENCE [LARGE SCALE GENOMIC DNA]</scope>
    <source>
        <strain>HF-2</strain>
    </source>
</reference>
<proteinExistence type="inferred from homology"/>